<accession>A5UI25</accession>
<name>RL21_HAEIG</name>
<dbReference type="EMBL" id="CP000672">
    <property type="protein sequence ID" value="ABR00431.1"/>
    <property type="molecule type" value="Genomic_DNA"/>
</dbReference>
<dbReference type="SMR" id="A5UI25"/>
<dbReference type="KEGG" id="hiq:CGSHiGG_07945"/>
<dbReference type="HOGENOM" id="CLU_061463_3_2_6"/>
<dbReference type="Proteomes" id="UP000001990">
    <property type="component" value="Chromosome"/>
</dbReference>
<dbReference type="GO" id="GO:0005737">
    <property type="term" value="C:cytoplasm"/>
    <property type="evidence" value="ECO:0007669"/>
    <property type="project" value="UniProtKB-ARBA"/>
</dbReference>
<dbReference type="GO" id="GO:1990904">
    <property type="term" value="C:ribonucleoprotein complex"/>
    <property type="evidence" value="ECO:0007669"/>
    <property type="project" value="UniProtKB-KW"/>
</dbReference>
<dbReference type="GO" id="GO:0005840">
    <property type="term" value="C:ribosome"/>
    <property type="evidence" value="ECO:0007669"/>
    <property type="project" value="UniProtKB-KW"/>
</dbReference>
<dbReference type="GO" id="GO:0019843">
    <property type="term" value="F:rRNA binding"/>
    <property type="evidence" value="ECO:0007669"/>
    <property type="project" value="UniProtKB-UniRule"/>
</dbReference>
<dbReference type="GO" id="GO:0003735">
    <property type="term" value="F:structural constituent of ribosome"/>
    <property type="evidence" value="ECO:0007669"/>
    <property type="project" value="InterPro"/>
</dbReference>
<dbReference type="GO" id="GO:0006412">
    <property type="term" value="P:translation"/>
    <property type="evidence" value="ECO:0007669"/>
    <property type="project" value="UniProtKB-UniRule"/>
</dbReference>
<dbReference type="HAMAP" id="MF_01363">
    <property type="entry name" value="Ribosomal_bL21"/>
    <property type="match status" value="1"/>
</dbReference>
<dbReference type="InterPro" id="IPR028909">
    <property type="entry name" value="bL21-like"/>
</dbReference>
<dbReference type="InterPro" id="IPR036164">
    <property type="entry name" value="bL21-like_sf"/>
</dbReference>
<dbReference type="InterPro" id="IPR001787">
    <property type="entry name" value="Ribosomal_bL21"/>
</dbReference>
<dbReference type="InterPro" id="IPR018258">
    <property type="entry name" value="Ribosomal_bL21_CS"/>
</dbReference>
<dbReference type="NCBIfam" id="TIGR00061">
    <property type="entry name" value="L21"/>
    <property type="match status" value="1"/>
</dbReference>
<dbReference type="PANTHER" id="PTHR21349">
    <property type="entry name" value="50S RIBOSOMAL PROTEIN L21"/>
    <property type="match status" value="1"/>
</dbReference>
<dbReference type="PANTHER" id="PTHR21349:SF0">
    <property type="entry name" value="LARGE RIBOSOMAL SUBUNIT PROTEIN BL21M"/>
    <property type="match status" value="1"/>
</dbReference>
<dbReference type="Pfam" id="PF00829">
    <property type="entry name" value="Ribosomal_L21p"/>
    <property type="match status" value="1"/>
</dbReference>
<dbReference type="SUPFAM" id="SSF141091">
    <property type="entry name" value="L21p-like"/>
    <property type="match status" value="1"/>
</dbReference>
<dbReference type="PROSITE" id="PS01169">
    <property type="entry name" value="RIBOSOMAL_L21"/>
    <property type="match status" value="1"/>
</dbReference>
<evidence type="ECO:0000255" key="1">
    <source>
        <dbReference type="HAMAP-Rule" id="MF_01363"/>
    </source>
</evidence>
<evidence type="ECO:0000305" key="2"/>
<comment type="function">
    <text evidence="1">This protein binds to 23S rRNA in the presence of protein L20.</text>
</comment>
<comment type="subunit">
    <text evidence="1">Part of the 50S ribosomal subunit. Contacts protein L20.</text>
</comment>
<comment type="similarity">
    <text evidence="1">Belongs to the bacterial ribosomal protein bL21 family.</text>
</comment>
<keyword id="KW-0687">Ribonucleoprotein</keyword>
<keyword id="KW-0689">Ribosomal protein</keyword>
<keyword id="KW-0694">RNA-binding</keyword>
<keyword id="KW-0699">rRNA-binding</keyword>
<feature type="chain" id="PRO_1000067839" description="Large ribosomal subunit protein bL21">
    <location>
        <begin position="1"/>
        <end position="103"/>
    </location>
</feature>
<organism>
    <name type="scientific">Haemophilus influenzae (strain PittGG)</name>
    <dbReference type="NCBI Taxonomy" id="374931"/>
    <lineage>
        <taxon>Bacteria</taxon>
        <taxon>Pseudomonadati</taxon>
        <taxon>Pseudomonadota</taxon>
        <taxon>Gammaproteobacteria</taxon>
        <taxon>Pasteurellales</taxon>
        <taxon>Pasteurellaceae</taxon>
        <taxon>Haemophilus</taxon>
    </lineage>
</organism>
<protein>
    <recommendedName>
        <fullName evidence="1">Large ribosomal subunit protein bL21</fullName>
    </recommendedName>
    <alternativeName>
        <fullName evidence="2">50S ribosomal protein L21</fullName>
    </alternativeName>
</protein>
<reference key="1">
    <citation type="journal article" date="2007" name="Genome Biol.">
        <title>Characterization and modeling of the Haemophilus influenzae core and supragenomes based on the complete genomic sequences of Rd and 12 clinical nontypeable strains.</title>
        <authorList>
            <person name="Hogg J.S."/>
            <person name="Hu F.Z."/>
            <person name="Janto B."/>
            <person name="Boissy R."/>
            <person name="Hayes J."/>
            <person name="Keefe R."/>
            <person name="Post J.C."/>
            <person name="Ehrlich G.D."/>
        </authorList>
    </citation>
    <scope>NUCLEOTIDE SEQUENCE [LARGE SCALE GENOMIC DNA]</scope>
    <source>
        <strain>PittGG</strain>
    </source>
</reference>
<proteinExistence type="inferred from homology"/>
<gene>
    <name evidence="1" type="primary">rplU</name>
    <name type="ordered locus">CGSHiGG_07945</name>
</gene>
<sequence length="103" mass="11370">MYAVFQSGGKQHRVSEGQVVRLEKLELATGATVEFDSVLMVVNGEDVKIGAPVVAGAKVVAEVVAQGRGEKVKIVKFRRRKHSRKQQGHRQWFTEVKITGIQA</sequence>